<feature type="chain" id="PRO_0000333283" description="ELMO domain-containing protein F">
    <location>
        <begin position="1"/>
        <end position="1185"/>
    </location>
</feature>
<feature type="domain" description="ELMO" evidence="1">
    <location>
        <begin position="275"/>
        <end position="488"/>
    </location>
</feature>
<feature type="region of interest" description="Disordered" evidence="2">
    <location>
        <begin position="88"/>
        <end position="133"/>
    </location>
</feature>
<feature type="region of interest" description="Disordered" evidence="2">
    <location>
        <begin position="176"/>
        <end position="196"/>
    </location>
</feature>
<feature type="region of interest" description="Disordered" evidence="2">
    <location>
        <begin position="361"/>
        <end position="409"/>
    </location>
</feature>
<feature type="region of interest" description="Disordered" evidence="2">
    <location>
        <begin position="566"/>
        <end position="628"/>
    </location>
</feature>
<feature type="region of interest" description="Disordered" evidence="2">
    <location>
        <begin position="642"/>
        <end position="805"/>
    </location>
</feature>
<feature type="region of interest" description="Disordered" evidence="2">
    <location>
        <begin position="819"/>
        <end position="868"/>
    </location>
</feature>
<feature type="region of interest" description="Disordered" evidence="2">
    <location>
        <begin position="883"/>
        <end position="989"/>
    </location>
</feature>
<feature type="region of interest" description="Disordered" evidence="2">
    <location>
        <begin position="1044"/>
        <end position="1114"/>
    </location>
</feature>
<feature type="compositionally biased region" description="Low complexity" evidence="2">
    <location>
        <begin position="94"/>
        <end position="127"/>
    </location>
</feature>
<feature type="compositionally biased region" description="Low complexity" evidence="2">
    <location>
        <begin position="176"/>
        <end position="194"/>
    </location>
</feature>
<feature type="compositionally biased region" description="Low complexity" evidence="2">
    <location>
        <begin position="361"/>
        <end position="406"/>
    </location>
</feature>
<feature type="compositionally biased region" description="Low complexity" evidence="2">
    <location>
        <begin position="587"/>
        <end position="613"/>
    </location>
</feature>
<feature type="compositionally biased region" description="Polar residues" evidence="2">
    <location>
        <begin position="648"/>
        <end position="665"/>
    </location>
</feature>
<feature type="compositionally biased region" description="Low complexity" evidence="2">
    <location>
        <begin position="688"/>
        <end position="699"/>
    </location>
</feature>
<feature type="compositionally biased region" description="Polar residues" evidence="2">
    <location>
        <begin position="721"/>
        <end position="732"/>
    </location>
</feature>
<feature type="compositionally biased region" description="Low complexity" evidence="2">
    <location>
        <begin position="733"/>
        <end position="760"/>
    </location>
</feature>
<feature type="compositionally biased region" description="Low complexity" evidence="2">
    <location>
        <begin position="767"/>
        <end position="780"/>
    </location>
</feature>
<feature type="compositionally biased region" description="Polar residues" evidence="2">
    <location>
        <begin position="781"/>
        <end position="790"/>
    </location>
</feature>
<feature type="compositionally biased region" description="Basic residues" evidence="2">
    <location>
        <begin position="829"/>
        <end position="841"/>
    </location>
</feature>
<feature type="compositionally biased region" description="Low complexity" evidence="2">
    <location>
        <begin position="853"/>
        <end position="864"/>
    </location>
</feature>
<feature type="compositionally biased region" description="Low complexity" evidence="2">
    <location>
        <begin position="912"/>
        <end position="974"/>
    </location>
</feature>
<feature type="compositionally biased region" description="Low complexity" evidence="2">
    <location>
        <begin position="1053"/>
        <end position="1072"/>
    </location>
</feature>
<feature type="compositionally biased region" description="Low complexity" evidence="2">
    <location>
        <begin position="1096"/>
        <end position="1109"/>
    </location>
</feature>
<proteinExistence type="predicted"/>
<dbReference type="EMBL" id="AAFI02000003">
    <property type="protein sequence ID" value="EAL73227.1"/>
    <property type="molecule type" value="Genomic_DNA"/>
</dbReference>
<dbReference type="RefSeq" id="XP_647117.1">
    <property type="nucleotide sequence ID" value="XM_642025.1"/>
</dbReference>
<dbReference type="FunCoup" id="Q55GR7">
    <property type="interactions" value="744"/>
</dbReference>
<dbReference type="STRING" id="44689.Q55GR7"/>
<dbReference type="PaxDb" id="44689-DDB0233911"/>
<dbReference type="EnsemblProtists" id="EAL73227">
    <property type="protein sequence ID" value="EAL73227"/>
    <property type="gene ID" value="DDB_G0267548"/>
</dbReference>
<dbReference type="GeneID" id="8615921"/>
<dbReference type="KEGG" id="ddi:DDB_G0267548"/>
<dbReference type="dictyBase" id="DDB_G0267548">
    <property type="gene designation" value="elmoF"/>
</dbReference>
<dbReference type="VEuPathDB" id="AmoebaDB:DDB_G0267548"/>
<dbReference type="eggNOG" id="KOG2998">
    <property type="taxonomic scope" value="Eukaryota"/>
</dbReference>
<dbReference type="HOGENOM" id="CLU_272547_0_0_1"/>
<dbReference type="InParanoid" id="Q55GR7"/>
<dbReference type="OMA" id="WFEELFC"/>
<dbReference type="Reactome" id="R-DDI-8849471">
    <property type="pathway name" value="PTK6 Regulates RHO GTPases, RAS GTPase and MAP kinases"/>
</dbReference>
<dbReference type="Reactome" id="R-DDI-9013408">
    <property type="pathway name" value="RHOG GTPase cycle"/>
</dbReference>
<dbReference type="PRO" id="PR:Q55GR7"/>
<dbReference type="Proteomes" id="UP000002195">
    <property type="component" value="Chromosome 1"/>
</dbReference>
<dbReference type="GO" id="GO:0005096">
    <property type="term" value="F:GTPase activator activity"/>
    <property type="evidence" value="ECO:0000318"/>
    <property type="project" value="GO_Central"/>
</dbReference>
<dbReference type="InterPro" id="IPR006816">
    <property type="entry name" value="ELMO_dom"/>
</dbReference>
<dbReference type="InterPro" id="IPR050868">
    <property type="entry name" value="ELMO_domain-containing"/>
</dbReference>
<dbReference type="PANTHER" id="PTHR12771:SF66">
    <property type="entry name" value="ELMO DOMAIN-CONTAINING PROTEIN F"/>
    <property type="match status" value="1"/>
</dbReference>
<dbReference type="PANTHER" id="PTHR12771">
    <property type="entry name" value="ENGULFMENT AND CELL MOTILITY"/>
    <property type="match status" value="1"/>
</dbReference>
<dbReference type="Pfam" id="PF04727">
    <property type="entry name" value="ELMO_CED12"/>
    <property type="match status" value="1"/>
</dbReference>
<dbReference type="PROSITE" id="PS51335">
    <property type="entry name" value="ELMO"/>
    <property type="match status" value="1"/>
</dbReference>
<protein>
    <recommendedName>
        <fullName>ELMO domain-containing protein F</fullName>
    </recommendedName>
</protein>
<gene>
    <name type="primary">elmoF</name>
    <name type="ORF">DDB_G0267548</name>
</gene>
<accession>Q55GR7</accession>
<organism>
    <name type="scientific">Dictyostelium discoideum</name>
    <name type="common">Social amoeba</name>
    <dbReference type="NCBI Taxonomy" id="44689"/>
    <lineage>
        <taxon>Eukaryota</taxon>
        <taxon>Amoebozoa</taxon>
        <taxon>Evosea</taxon>
        <taxon>Eumycetozoa</taxon>
        <taxon>Dictyostelia</taxon>
        <taxon>Dictyosteliales</taxon>
        <taxon>Dictyosteliaceae</taxon>
        <taxon>Dictyostelium</taxon>
    </lineage>
</organism>
<sequence>METQDTLTMIDLTSSVPSLSLSNVIQQQNEVIESENKNVNTELLTLSTQTVISFVYCNRQASLFNLLTQMLTTNTFSPINPSVEIPFQPSPYPSTIHNNSSTSINQSSSPSSSSSTTPSSSTQSSPILQGNNNNITGKPSLMFNILDKAINAISHQYKKNFYIHILEKPISSPNLISTNPNNNSNNNNNNNNNTAEDHDKLVAGCLSFINHMLSSAPSYFDFERYRQVLSSQGVNEVIKTFVKSVNPNVRLELLHYQKHKINGIKASKQTSIFLDRQNVLSFLNRLCKMSFPNNGGDSPTTNEEKMKLLGFETDDLHLELQSTGLLGIRNMIYFCARYFRIYDEILKAQIKKFKEININNNNNSNNNDENNNNNNNNNNNNNNNNNNNNNNNNNSDNVENNNNNNVENEDDSYYSFSRVGFTLTNLIFELYIEDENLYEIIFDQDDWFEELFCISFELFDEIWEREGTCQEDYIPVLHKTRAVLSRIKWTNPSSIASFQKTLGCVLDEMWSKTNDLKEEKEMNARAGGLSDSIMGVPHGNANGGSGASGNLRFKKFFNEKFKQYRKSTDSINSDGSEAIFQPPPQSPQSQQQSQQQTQQTQQPASPLQTSSSSDIQKSPVPHKINTKSMSFKKLFSDLKSAETERKNSLTGSNGITDGGDSNPNSGAEVLSLPNTPRYLGGDNDNEGSENGSSSSFSFEKLSRKLRSGSSSIKDKSSSPKFNSLTGELTMNISSSSSLEGNQQQQQQQSTNSSTTSPNVSPYLQSVTTTTTNTTTATTTTDDQSQQQVPPQFNIDDGKRSLKSSGNSIYKSVKKAMSNLGEKGKDIGKKVKSKKEKKKKSKQQVEHSFEDDCNNSANNSSYNNSPYIIPGDLELPTNFRPSLDLDFDKNSDSSYEDSENETNTLDDIQSIDSSSNNNSNNNSNNNSSSNLNNNSTSSINLMNDQSLQSVQQPQPQQQQQQQQQQQQPIVEQQPQANLEKEQNNSSTQVTPIISSAKLDVNEKLESIPTVIIEPIDDDNNNNGINRSISDQSLTDAMSLNYQITQKQKSRLSTDENQNQNNNNNKLSDNSSNEQHPVSPSYPRRQINIINGGGGSAGRNSTLNSGSSSLSKKPVLSRAPIPSVFSSSSHNPPAMVKSPSIKHLVTFFEVKSSELKDNSSTVSGSVNNNLNVGIPQLKREKSFKSDF</sequence>
<keyword id="KW-1185">Reference proteome</keyword>
<name>ELMOF_DICDI</name>
<reference key="1">
    <citation type="journal article" date="2005" name="Nature">
        <title>The genome of the social amoeba Dictyostelium discoideum.</title>
        <authorList>
            <person name="Eichinger L."/>
            <person name="Pachebat J.A."/>
            <person name="Gloeckner G."/>
            <person name="Rajandream M.A."/>
            <person name="Sucgang R."/>
            <person name="Berriman M."/>
            <person name="Song J."/>
            <person name="Olsen R."/>
            <person name="Szafranski K."/>
            <person name="Xu Q."/>
            <person name="Tunggal B."/>
            <person name="Kummerfeld S."/>
            <person name="Madera M."/>
            <person name="Konfortov B.A."/>
            <person name="Rivero F."/>
            <person name="Bankier A.T."/>
            <person name="Lehmann R."/>
            <person name="Hamlin N."/>
            <person name="Davies R."/>
            <person name="Gaudet P."/>
            <person name="Fey P."/>
            <person name="Pilcher K."/>
            <person name="Chen G."/>
            <person name="Saunders D."/>
            <person name="Sodergren E.J."/>
            <person name="Davis P."/>
            <person name="Kerhornou A."/>
            <person name="Nie X."/>
            <person name="Hall N."/>
            <person name="Anjard C."/>
            <person name="Hemphill L."/>
            <person name="Bason N."/>
            <person name="Farbrother P."/>
            <person name="Desany B."/>
            <person name="Just E."/>
            <person name="Morio T."/>
            <person name="Rost R."/>
            <person name="Churcher C.M."/>
            <person name="Cooper J."/>
            <person name="Haydock S."/>
            <person name="van Driessche N."/>
            <person name="Cronin A."/>
            <person name="Goodhead I."/>
            <person name="Muzny D.M."/>
            <person name="Mourier T."/>
            <person name="Pain A."/>
            <person name="Lu M."/>
            <person name="Harper D."/>
            <person name="Lindsay R."/>
            <person name="Hauser H."/>
            <person name="James K.D."/>
            <person name="Quiles M."/>
            <person name="Madan Babu M."/>
            <person name="Saito T."/>
            <person name="Buchrieser C."/>
            <person name="Wardroper A."/>
            <person name="Felder M."/>
            <person name="Thangavelu M."/>
            <person name="Johnson D."/>
            <person name="Knights A."/>
            <person name="Loulseged H."/>
            <person name="Mungall K.L."/>
            <person name="Oliver K."/>
            <person name="Price C."/>
            <person name="Quail M.A."/>
            <person name="Urushihara H."/>
            <person name="Hernandez J."/>
            <person name="Rabbinowitsch E."/>
            <person name="Steffen D."/>
            <person name="Sanders M."/>
            <person name="Ma J."/>
            <person name="Kohara Y."/>
            <person name="Sharp S."/>
            <person name="Simmonds M.N."/>
            <person name="Spiegler S."/>
            <person name="Tivey A."/>
            <person name="Sugano S."/>
            <person name="White B."/>
            <person name="Walker D."/>
            <person name="Woodward J.R."/>
            <person name="Winckler T."/>
            <person name="Tanaka Y."/>
            <person name="Shaulsky G."/>
            <person name="Schleicher M."/>
            <person name="Weinstock G.M."/>
            <person name="Rosenthal A."/>
            <person name="Cox E.C."/>
            <person name="Chisholm R.L."/>
            <person name="Gibbs R.A."/>
            <person name="Loomis W.F."/>
            <person name="Platzer M."/>
            <person name="Kay R.R."/>
            <person name="Williams J.G."/>
            <person name="Dear P.H."/>
            <person name="Noegel A.A."/>
            <person name="Barrell B.G."/>
            <person name="Kuspa A."/>
        </authorList>
    </citation>
    <scope>NUCLEOTIDE SEQUENCE [LARGE SCALE GENOMIC DNA]</scope>
    <source>
        <strain>AX4</strain>
    </source>
</reference>
<evidence type="ECO:0000255" key="1">
    <source>
        <dbReference type="PROSITE-ProRule" id="PRU00664"/>
    </source>
</evidence>
<evidence type="ECO:0000256" key="2">
    <source>
        <dbReference type="SAM" id="MobiDB-lite"/>
    </source>
</evidence>